<reference key="1">
    <citation type="journal article" date="1999" name="Extremophiles">
        <title>Sequencing of three lambda clones from the genome of alkaliphilic Bacillus sp. strain C-125.</title>
        <authorList>
            <person name="Takami H."/>
            <person name="Nakasone K."/>
            <person name="Ogasawara N."/>
            <person name="Hirama C."/>
            <person name="Nakamura Y."/>
            <person name="Masui N."/>
            <person name="Fuji F."/>
            <person name="Takaki Y."/>
            <person name="Inoue A."/>
            <person name="Horikoshi K."/>
        </authorList>
    </citation>
    <scope>NUCLEOTIDE SEQUENCE [GENOMIC DNA]</scope>
    <source>
        <strain>ATCC BAA-125 / DSM 18197 / FERM 7344 / JCM 9153 / C-125</strain>
    </source>
</reference>
<reference key="2">
    <citation type="journal article" date="2000" name="Nucleic Acids Res.">
        <title>Complete genome sequence of the alkaliphilic bacterium Bacillus halodurans and genomic sequence comparison with Bacillus subtilis.</title>
        <authorList>
            <person name="Takami H."/>
            <person name="Nakasone K."/>
            <person name="Takaki Y."/>
            <person name="Maeno G."/>
            <person name="Sasaki R."/>
            <person name="Masui N."/>
            <person name="Fuji F."/>
            <person name="Hirama C."/>
            <person name="Nakamura Y."/>
            <person name="Ogasawara N."/>
            <person name="Kuhara S."/>
            <person name="Horikoshi K."/>
        </authorList>
    </citation>
    <scope>NUCLEOTIDE SEQUENCE [LARGE SCALE GENOMIC DNA]</scope>
    <source>
        <strain>ATCC BAA-125 / DSM 18197 / FERM 7344 / JCM 9153 / C-125</strain>
    </source>
</reference>
<keyword id="KW-0046">Antibiotic resistance</keyword>
<keyword id="KW-0067">ATP-binding</keyword>
<keyword id="KW-0547">Nucleotide-binding</keyword>
<keyword id="KW-1185">Reference proteome</keyword>
<keyword id="KW-0813">Transport</keyword>
<feature type="chain" id="PRO_0000091944" description="Bacitracin export ATP-binding protein BceA">
    <location>
        <begin position="1"/>
        <end position="253"/>
    </location>
</feature>
<feature type="domain" description="ABC transporter" evidence="2">
    <location>
        <begin position="4"/>
        <end position="243"/>
    </location>
</feature>
<feature type="binding site" evidence="2">
    <location>
        <begin position="40"/>
        <end position="47"/>
    </location>
    <ligand>
        <name>ATP</name>
        <dbReference type="ChEBI" id="CHEBI:30616"/>
    </ligand>
</feature>
<proteinExistence type="inferred from homology"/>
<comment type="function">
    <text evidence="1">Part of the ABC transporter complex BceAB (TC 3.A.1.123.5) involved in bacitracin export. Responsible for energy coupling to the transport system (By similarity).</text>
</comment>
<comment type="subunit">
    <text evidence="3">The complex is composed of two ATP-binding proteins (BceA) and two transmembrane proteins (BceB).</text>
</comment>
<comment type="similarity">
    <text evidence="3">Belongs to the ABC transporter superfamily.</text>
</comment>
<comment type="sequence caution" evidence="3">
    <conflict type="frameshift">
        <sequence resource="EMBL-CDS" id="BAA75354"/>
    </conflict>
</comment>
<name>BCEA_HALH5</name>
<dbReference type="EMBL" id="AB011838">
    <property type="protein sequence ID" value="BAA75354.1"/>
    <property type="status" value="ALT_FRAME"/>
    <property type="molecule type" value="Genomic_DNA"/>
</dbReference>
<dbReference type="EMBL" id="BA000004">
    <property type="protein sequence ID" value="BAB07632.1"/>
    <property type="molecule type" value="Genomic_DNA"/>
</dbReference>
<dbReference type="PIR" id="A84139">
    <property type="entry name" value="A84139"/>
</dbReference>
<dbReference type="RefSeq" id="WP_010900038.1">
    <property type="nucleotide sequence ID" value="NC_002570.2"/>
</dbReference>
<dbReference type="SMR" id="Q9K619"/>
<dbReference type="STRING" id="272558.gene:10729826"/>
<dbReference type="GeneID" id="87599457"/>
<dbReference type="KEGG" id="bha:BH3913"/>
<dbReference type="eggNOG" id="COG1136">
    <property type="taxonomic scope" value="Bacteria"/>
</dbReference>
<dbReference type="HOGENOM" id="CLU_000604_1_22_9"/>
<dbReference type="OrthoDB" id="9791546at2"/>
<dbReference type="Proteomes" id="UP000001258">
    <property type="component" value="Chromosome"/>
</dbReference>
<dbReference type="GO" id="GO:0005524">
    <property type="term" value="F:ATP binding"/>
    <property type="evidence" value="ECO:0007669"/>
    <property type="project" value="UniProtKB-KW"/>
</dbReference>
<dbReference type="GO" id="GO:0016887">
    <property type="term" value="F:ATP hydrolysis activity"/>
    <property type="evidence" value="ECO:0007669"/>
    <property type="project" value="InterPro"/>
</dbReference>
<dbReference type="GO" id="GO:0046677">
    <property type="term" value="P:response to antibiotic"/>
    <property type="evidence" value="ECO:0007669"/>
    <property type="project" value="UniProtKB-KW"/>
</dbReference>
<dbReference type="CDD" id="cd03255">
    <property type="entry name" value="ABC_MJ0796_LolCDE_FtsE"/>
    <property type="match status" value="1"/>
</dbReference>
<dbReference type="FunFam" id="3.40.50.300:FF:000032">
    <property type="entry name" value="Export ABC transporter ATP-binding protein"/>
    <property type="match status" value="1"/>
</dbReference>
<dbReference type="Gene3D" id="3.40.50.300">
    <property type="entry name" value="P-loop containing nucleotide triphosphate hydrolases"/>
    <property type="match status" value="1"/>
</dbReference>
<dbReference type="InterPro" id="IPR003593">
    <property type="entry name" value="AAA+_ATPase"/>
</dbReference>
<dbReference type="InterPro" id="IPR003439">
    <property type="entry name" value="ABC_transporter-like_ATP-bd"/>
</dbReference>
<dbReference type="InterPro" id="IPR017911">
    <property type="entry name" value="MacB-like_ATP-bd"/>
</dbReference>
<dbReference type="InterPro" id="IPR027417">
    <property type="entry name" value="P-loop_NTPase"/>
</dbReference>
<dbReference type="PANTHER" id="PTHR42798:SF7">
    <property type="entry name" value="ALPHA-D-RIBOSE 1-METHYLPHOSPHONATE 5-TRIPHOSPHATE SYNTHASE SUBUNIT PHNL"/>
    <property type="match status" value="1"/>
</dbReference>
<dbReference type="PANTHER" id="PTHR42798">
    <property type="entry name" value="LIPOPROTEIN-RELEASING SYSTEM ATP-BINDING PROTEIN LOLD"/>
    <property type="match status" value="1"/>
</dbReference>
<dbReference type="Pfam" id="PF00005">
    <property type="entry name" value="ABC_tran"/>
    <property type="match status" value="1"/>
</dbReference>
<dbReference type="SMART" id="SM00382">
    <property type="entry name" value="AAA"/>
    <property type="match status" value="1"/>
</dbReference>
<dbReference type="SUPFAM" id="SSF52540">
    <property type="entry name" value="P-loop containing nucleoside triphosphate hydrolases"/>
    <property type="match status" value="1"/>
</dbReference>
<dbReference type="PROSITE" id="PS50893">
    <property type="entry name" value="ABC_TRANSPORTER_2"/>
    <property type="match status" value="1"/>
</dbReference>
<evidence type="ECO:0000250" key="1"/>
<evidence type="ECO:0000255" key="2">
    <source>
        <dbReference type="PROSITE-ProRule" id="PRU00434"/>
    </source>
</evidence>
<evidence type="ECO:0000305" key="3"/>
<organism>
    <name type="scientific">Halalkalibacterium halodurans (strain ATCC BAA-125 / DSM 18197 / FERM 7344 / JCM 9153 / C-125)</name>
    <name type="common">Bacillus halodurans</name>
    <dbReference type="NCBI Taxonomy" id="272558"/>
    <lineage>
        <taxon>Bacteria</taxon>
        <taxon>Bacillati</taxon>
        <taxon>Bacillota</taxon>
        <taxon>Bacilli</taxon>
        <taxon>Bacillales</taxon>
        <taxon>Bacillaceae</taxon>
        <taxon>Halalkalibacterium (ex Joshi et al. 2022)</taxon>
    </lineage>
</organism>
<protein>
    <recommendedName>
        <fullName>Bacitracin export ATP-binding protein BceA</fullName>
    </recommendedName>
</protein>
<gene>
    <name type="primary">bceA</name>
    <name type="ordered locus">BH3913</name>
</gene>
<accession>Q9K619</accession>
<accession>Q9Z9S8</accession>
<sequence length="253" mass="28097">MAILEATNIHKSYGTKLNKQEVLKGIDIRVEKGEFVSIMGASGSGKTTLLNVLSSIDKLSNGSIKIEGSEMTRLKEKELAQFRKKHLGFIFQEYNLLDTLTVKENILLPLSITKIPRKAADEKFKQVATELGIYEIKDKYPNEISGGQKQRASAARAFIHEPSIIFADEPTGALDSKSASDLLGKLQQLNEKLRATIVMVTHDPVAASYCSRVIFIKDGQIYTQLHKGDESRQTFFKDIMKTQGVLGGVQNDH</sequence>